<gene>
    <name evidence="1" type="primary">ppnP</name>
    <name type="ordered locus">PA1574</name>
</gene>
<feature type="chain" id="PRO_0000211773" description="Pyrimidine/purine nucleoside phosphorylase">
    <location>
        <begin position="1"/>
        <end position="93"/>
    </location>
</feature>
<feature type="strand" evidence="2">
    <location>
        <begin position="4"/>
        <end position="7"/>
    </location>
</feature>
<feature type="turn" evidence="2">
    <location>
        <begin position="8"/>
        <end position="11"/>
    </location>
</feature>
<feature type="strand" evidence="2">
    <location>
        <begin position="12"/>
        <end position="19"/>
    </location>
</feature>
<feature type="strand" evidence="2">
    <location>
        <begin position="22"/>
        <end position="29"/>
    </location>
</feature>
<feature type="strand" evidence="2">
    <location>
        <begin position="31"/>
        <end position="37"/>
    </location>
</feature>
<feature type="strand" evidence="2">
    <location>
        <begin position="39"/>
        <end position="54"/>
    </location>
</feature>
<feature type="strand" evidence="2">
    <location>
        <begin position="62"/>
        <end position="65"/>
    </location>
</feature>
<feature type="strand" evidence="2">
    <location>
        <begin position="69"/>
        <end position="72"/>
    </location>
</feature>
<feature type="strand" evidence="2">
    <location>
        <begin position="77"/>
        <end position="82"/>
    </location>
</feature>
<feature type="strand" evidence="2">
    <location>
        <begin position="86"/>
        <end position="93"/>
    </location>
</feature>
<reference key="1">
    <citation type="journal article" date="2000" name="Nature">
        <title>Complete genome sequence of Pseudomonas aeruginosa PAO1, an opportunistic pathogen.</title>
        <authorList>
            <person name="Stover C.K."/>
            <person name="Pham X.-Q.T."/>
            <person name="Erwin A.L."/>
            <person name="Mizoguchi S.D."/>
            <person name="Warrener P."/>
            <person name="Hickey M.J."/>
            <person name="Brinkman F.S.L."/>
            <person name="Hufnagle W.O."/>
            <person name="Kowalik D.J."/>
            <person name="Lagrou M."/>
            <person name="Garber R.L."/>
            <person name="Goltry L."/>
            <person name="Tolentino E."/>
            <person name="Westbrock-Wadman S."/>
            <person name="Yuan Y."/>
            <person name="Brody L.L."/>
            <person name="Coulter S.N."/>
            <person name="Folger K.R."/>
            <person name="Kas A."/>
            <person name="Larbig K."/>
            <person name="Lim R.M."/>
            <person name="Smith K.A."/>
            <person name="Spencer D.H."/>
            <person name="Wong G.K.-S."/>
            <person name="Wu Z."/>
            <person name="Paulsen I.T."/>
            <person name="Reizer J."/>
            <person name="Saier M.H. Jr."/>
            <person name="Hancock R.E.W."/>
            <person name="Lory S."/>
            <person name="Olson M.V."/>
        </authorList>
    </citation>
    <scope>NUCLEOTIDE SEQUENCE [LARGE SCALE GENOMIC DNA]</scope>
    <source>
        <strain>ATCC 15692 / DSM 22644 / CIP 104116 / JCM 14847 / LMG 12228 / 1C / PRS 101 / PAO1</strain>
    </source>
</reference>
<name>PPNP_PSEAE</name>
<organism>
    <name type="scientific">Pseudomonas aeruginosa (strain ATCC 15692 / DSM 22644 / CIP 104116 / JCM 14847 / LMG 12228 / 1C / PRS 101 / PAO1)</name>
    <dbReference type="NCBI Taxonomy" id="208964"/>
    <lineage>
        <taxon>Bacteria</taxon>
        <taxon>Pseudomonadati</taxon>
        <taxon>Pseudomonadota</taxon>
        <taxon>Gammaproteobacteria</taxon>
        <taxon>Pseudomonadales</taxon>
        <taxon>Pseudomonadaceae</taxon>
        <taxon>Pseudomonas</taxon>
    </lineage>
</organism>
<sequence>MFKVNEYFDGTVKSIAFDMTAGPATIGVMAAGEYEFGTSQLEIMHVVAGALTVKLPGSDEWQEYASGSQFTVPANSKFQLKVAQDTAYLCEYR</sequence>
<evidence type="ECO:0000255" key="1">
    <source>
        <dbReference type="HAMAP-Rule" id="MF_01537"/>
    </source>
</evidence>
<evidence type="ECO:0007829" key="2">
    <source>
        <dbReference type="PDB" id="7EYP"/>
    </source>
</evidence>
<dbReference type="EC" id="2.4.2.1" evidence="1"/>
<dbReference type="EC" id="2.4.2.2" evidence="1"/>
<dbReference type="EMBL" id="AE004091">
    <property type="protein sequence ID" value="AAG04963.1"/>
    <property type="molecule type" value="Genomic_DNA"/>
</dbReference>
<dbReference type="PIR" id="D83447">
    <property type="entry name" value="D83447"/>
</dbReference>
<dbReference type="RefSeq" id="NP_250265.1">
    <property type="nucleotide sequence ID" value="NC_002516.2"/>
</dbReference>
<dbReference type="RefSeq" id="WP_003087375.1">
    <property type="nucleotide sequence ID" value="NZ_QZGE01000003.1"/>
</dbReference>
<dbReference type="PDB" id="7EYP">
    <property type="method" value="X-ray"/>
    <property type="resolution" value="1.50 A"/>
    <property type="chains" value="A/B=1-93"/>
</dbReference>
<dbReference type="PDBsum" id="7EYP"/>
<dbReference type="SMR" id="Q9I3E3"/>
<dbReference type="FunCoup" id="Q9I3E3">
    <property type="interactions" value="93"/>
</dbReference>
<dbReference type="STRING" id="208964.PA1574"/>
<dbReference type="PaxDb" id="208964-PA1574"/>
<dbReference type="DNASU" id="878174"/>
<dbReference type="GeneID" id="878174"/>
<dbReference type="KEGG" id="pae:PA1574"/>
<dbReference type="PATRIC" id="fig|208964.12.peg.1632"/>
<dbReference type="PseudoCAP" id="PA1574"/>
<dbReference type="HOGENOM" id="CLU_157874_0_0_6"/>
<dbReference type="InParanoid" id="Q9I3E3"/>
<dbReference type="OrthoDB" id="9793848at2"/>
<dbReference type="PhylomeDB" id="Q9I3E3"/>
<dbReference type="BioCyc" id="PAER208964:G1FZ6-1603-MONOMER"/>
<dbReference type="Proteomes" id="UP000002438">
    <property type="component" value="Chromosome"/>
</dbReference>
<dbReference type="GO" id="GO:0005829">
    <property type="term" value="C:cytosol"/>
    <property type="evidence" value="ECO:0000318"/>
    <property type="project" value="GO_Central"/>
</dbReference>
<dbReference type="GO" id="GO:0047975">
    <property type="term" value="F:guanosine phosphorylase activity"/>
    <property type="evidence" value="ECO:0007669"/>
    <property type="project" value="UniProtKB-EC"/>
</dbReference>
<dbReference type="GO" id="GO:0004731">
    <property type="term" value="F:purine-nucleoside phosphorylase activity"/>
    <property type="evidence" value="ECO:0000318"/>
    <property type="project" value="GO_Central"/>
</dbReference>
<dbReference type="GO" id="GO:0016154">
    <property type="term" value="F:pyrimidine-nucleoside phosphorylase activity"/>
    <property type="evidence" value="ECO:0000318"/>
    <property type="project" value="GO_Central"/>
</dbReference>
<dbReference type="GO" id="GO:0009032">
    <property type="term" value="F:thymidine phosphorylase activity"/>
    <property type="evidence" value="ECO:0007669"/>
    <property type="project" value="UniProtKB-EC"/>
</dbReference>
<dbReference type="GO" id="GO:0004850">
    <property type="term" value="F:uridine phosphorylase activity"/>
    <property type="evidence" value="ECO:0007669"/>
    <property type="project" value="UniProtKB-EC"/>
</dbReference>
<dbReference type="CDD" id="cd20296">
    <property type="entry name" value="cupin_PpnP-like"/>
    <property type="match status" value="1"/>
</dbReference>
<dbReference type="FunFam" id="2.60.120.10:FF:000016">
    <property type="entry name" value="Pyrimidine/purine nucleoside phosphorylase"/>
    <property type="match status" value="1"/>
</dbReference>
<dbReference type="Gene3D" id="2.60.120.10">
    <property type="entry name" value="Jelly Rolls"/>
    <property type="match status" value="1"/>
</dbReference>
<dbReference type="HAMAP" id="MF_01537">
    <property type="entry name" value="Nucleos_phosphorylase_PpnP"/>
    <property type="match status" value="1"/>
</dbReference>
<dbReference type="InterPro" id="IPR009664">
    <property type="entry name" value="Ppnp"/>
</dbReference>
<dbReference type="InterPro" id="IPR014710">
    <property type="entry name" value="RmlC-like_jellyroll"/>
</dbReference>
<dbReference type="InterPro" id="IPR011051">
    <property type="entry name" value="RmlC_Cupin_sf"/>
</dbReference>
<dbReference type="PANTHER" id="PTHR36540">
    <property type="entry name" value="PYRIMIDINE/PURINE NUCLEOSIDE PHOSPHORYLASE"/>
    <property type="match status" value="1"/>
</dbReference>
<dbReference type="PANTHER" id="PTHR36540:SF1">
    <property type="entry name" value="PYRIMIDINE_PURINE NUCLEOSIDE PHOSPHORYLASE"/>
    <property type="match status" value="1"/>
</dbReference>
<dbReference type="Pfam" id="PF06865">
    <property type="entry name" value="Ppnp"/>
    <property type="match status" value="1"/>
</dbReference>
<dbReference type="SUPFAM" id="SSF51182">
    <property type="entry name" value="RmlC-like cupins"/>
    <property type="match status" value="1"/>
</dbReference>
<accession>Q9I3E3</accession>
<protein>
    <recommendedName>
        <fullName evidence="1">Pyrimidine/purine nucleoside phosphorylase</fullName>
        <ecNumber evidence="1">2.4.2.1</ecNumber>
        <ecNumber evidence="1">2.4.2.2</ecNumber>
    </recommendedName>
    <alternativeName>
        <fullName evidence="1">Adenosine phosphorylase</fullName>
    </alternativeName>
    <alternativeName>
        <fullName evidence="1">Cytidine phosphorylase</fullName>
    </alternativeName>
    <alternativeName>
        <fullName evidence="1">Guanosine phosphorylase</fullName>
    </alternativeName>
    <alternativeName>
        <fullName evidence="1">Inosine phosphorylase</fullName>
    </alternativeName>
    <alternativeName>
        <fullName evidence="1">Thymidine phosphorylase</fullName>
    </alternativeName>
    <alternativeName>
        <fullName evidence="1">Uridine phosphorylase</fullName>
    </alternativeName>
    <alternativeName>
        <fullName evidence="1">Xanthosine phosphorylase</fullName>
    </alternativeName>
</protein>
<comment type="function">
    <text evidence="1">Catalyzes the phosphorolysis of diverse nucleosides, yielding D-ribose 1-phosphate and the respective free bases. Can use uridine, adenosine, guanosine, cytidine, thymidine, inosine and xanthosine as substrates. Also catalyzes the reverse reactions.</text>
</comment>
<comment type="catalytic activity">
    <reaction evidence="1">
        <text>a purine D-ribonucleoside + phosphate = a purine nucleobase + alpha-D-ribose 1-phosphate</text>
        <dbReference type="Rhea" id="RHEA:19805"/>
        <dbReference type="ChEBI" id="CHEBI:26386"/>
        <dbReference type="ChEBI" id="CHEBI:43474"/>
        <dbReference type="ChEBI" id="CHEBI:57720"/>
        <dbReference type="ChEBI" id="CHEBI:142355"/>
        <dbReference type="EC" id="2.4.2.1"/>
    </reaction>
</comment>
<comment type="catalytic activity">
    <reaction evidence="1">
        <text>adenosine + phosphate = alpha-D-ribose 1-phosphate + adenine</text>
        <dbReference type="Rhea" id="RHEA:27642"/>
        <dbReference type="ChEBI" id="CHEBI:16335"/>
        <dbReference type="ChEBI" id="CHEBI:16708"/>
        <dbReference type="ChEBI" id="CHEBI:43474"/>
        <dbReference type="ChEBI" id="CHEBI:57720"/>
        <dbReference type="EC" id="2.4.2.1"/>
    </reaction>
</comment>
<comment type="catalytic activity">
    <reaction evidence="1">
        <text>cytidine + phosphate = cytosine + alpha-D-ribose 1-phosphate</text>
        <dbReference type="Rhea" id="RHEA:52540"/>
        <dbReference type="ChEBI" id="CHEBI:16040"/>
        <dbReference type="ChEBI" id="CHEBI:17562"/>
        <dbReference type="ChEBI" id="CHEBI:43474"/>
        <dbReference type="ChEBI" id="CHEBI:57720"/>
        <dbReference type="EC" id="2.4.2.2"/>
    </reaction>
</comment>
<comment type="catalytic activity">
    <reaction evidence="1">
        <text>guanosine + phosphate = alpha-D-ribose 1-phosphate + guanine</text>
        <dbReference type="Rhea" id="RHEA:13233"/>
        <dbReference type="ChEBI" id="CHEBI:16235"/>
        <dbReference type="ChEBI" id="CHEBI:16750"/>
        <dbReference type="ChEBI" id="CHEBI:43474"/>
        <dbReference type="ChEBI" id="CHEBI:57720"/>
        <dbReference type="EC" id="2.4.2.1"/>
    </reaction>
</comment>
<comment type="catalytic activity">
    <reaction evidence="1">
        <text>inosine + phosphate = alpha-D-ribose 1-phosphate + hypoxanthine</text>
        <dbReference type="Rhea" id="RHEA:27646"/>
        <dbReference type="ChEBI" id="CHEBI:17368"/>
        <dbReference type="ChEBI" id="CHEBI:17596"/>
        <dbReference type="ChEBI" id="CHEBI:43474"/>
        <dbReference type="ChEBI" id="CHEBI:57720"/>
        <dbReference type="EC" id="2.4.2.1"/>
    </reaction>
</comment>
<comment type="catalytic activity">
    <reaction evidence="1">
        <text>thymidine + phosphate = 2-deoxy-alpha-D-ribose 1-phosphate + thymine</text>
        <dbReference type="Rhea" id="RHEA:16037"/>
        <dbReference type="ChEBI" id="CHEBI:17748"/>
        <dbReference type="ChEBI" id="CHEBI:17821"/>
        <dbReference type="ChEBI" id="CHEBI:43474"/>
        <dbReference type="ChEBI" id="CHEBI:57259"/>
        <dbReference type="EC" id="2.4.2.2"/>
    </reaction>
</comment>
<comment type="catalytic activity">
    <reaction evidence="1">
        <text>uridine + phosphate = alpha-D-ribose 1-phosphate + uracil</text>
        <dbReference type="Rhea" id="RHEA:24388"/>
        <dbReference type="ChEBI" id="CHEBI:16704"/>
        <dbReference type="ChEBI" id="CHEBI:17568"/>
        <dbReference type="ChEBI" id="CHEBI:43474"/>
        <dbReference type="ChEBI" id="CHEBI:57720"/>
        <dbReference type="EC" id="2.4.2.2"/>
    </reaction>
</comment>
<comment type="catalytic activity">
    <reaction evidence="1">
        <text>xanthosine + phosphate = alpha-D-ribose 1-phosphate + xanthine</text>
        <dbReference type="Rhea" id="RHEA:27638"/>
        <dbReference type="ChEBI" id="CHEBI:17712"/>
        <dbReference type="ChEBI" id="CHEBI:18107"/>
        <dbReference type="ChEBI" id="CHEBI:43474"/>
        <dbReference type="ChEBI" id="CHEBI:57720"/>
        <dbReference type="EC" id="2.4.2.1"/>
    </reaction>
</comment>
<comment type="similarity">
    <text evidence="1">Belongs to the nucleoside phosphorylase PpnP family.</text>
</comment>
<keyword id="KW-0002">3D-structure</keyword>
<keyword id="KW-0328">Glycosyltransferase</keyword>
<keyword id="KW-1185">Reference proteome</keyword>
<keyword id="KW-0808">Transferase</keyword>
<proteinExistence type="evidence at protein level"/>